<sequence>MSTDFDRIYYNQSKLGGRFRLAEGGLGWKASATGGSASTQNNEPLLLAADEVSSVQWSRGCRGYELKISTKNKGLIQMDGFQQEDFNLLKNDFQRRFNMQLEHREHSLRGWNWGKLDLARNEMVFSLNGKPTFEIPYTHINNTNLTAKNEIALEFDTQNEAYNPAGDELVEMRLYVPGTVEENEDQDQIMVKDEAEAEDGVKSEVKTEEGSEEPDVQEEKTLAEYFYEELRSKADIGEISGDAIISFQDLFFTTPRGRYDIDIYKNSIRLRGKTYEYKLQHRQINRIFSLPKADDIHYLMVLSIDPPIRQGQTSYPFLVLQFQKDEETEVQLNVEDDEFEKLYKDKLKKQYDAKTHIVLSHVLKGLTGRRVIVPGEYKSKYDQCAVSCSYKVNEGHLYPLDNAFLFLTKPTLYIPFQDIAAVNISRAGQTSTSARTFDLEVVMRANRGTTTFANISKEEQQLLETFLRSKNLRVKNEDKEAEQRLQTAFGSDSDDDDVDINMGSAGEDEESVDEDFHASDEDDDVAEEFDSEASASDSEGETSKSERPSKKAKLE</sequence>
<name>POB3_KLULA</name>
<reference key="1">
    <citation type="journal article" date="2004" name="Nature">
        <title>Genome evolution in yeasts.</title>
        <authorList>
            <person name="Dujon B."/>
            <person name="Sherman D."/>
            <person name="Fischer G."/>
            <person name="Durrens P."/>
            <person name="Casaregola S."/>
            <person name="Lafontaine I."/>
            <person name="de Montigny J."/>
            <person name="Marck C."/>
            <person name="Neuveglise C."/>
            <person name="Talla E."/>
            <person name="Goffard N."/>
            <person name="Frangeul L."/>
            <person name="Aigle M."/>
            <person name="Anthouard V."/>
            <person name="Babour A."/>
            <person name="Barbe V."/>
            <person name="Barnay S."/>
            <person name="Blanchin S."/>
            <person name="Beckerich J.-M."/>
            <person name="Beyne E."/>
            <person name="Bleykasten C."/>
            <person name="Boisrame A."/>
            <person name="Boyer J."/>
            <person name="Cattolico L."/>
            <person name="Confanioleri F."/>
            <person name="de Daruvar A."/>
            <person name="Despons L."/>
            <person name="Fabre E."/>
            <person name="Fairhead C."/>
            <person name="Ferry-Dumazet H."/>
            <person name="Groppi A."/>
            <person name="Hantraye F."/>
            <person name="Hennequin C."/>
            <person name="Jauniaux N."/>
            <person name="Joyet P."/>
            <person name="Kachouri R."/>
            <person name="Kerrest A."/>
            <person name="Koszul R."/>
            <person name="Lemaire M."/>
            <person name="Lesur I."/>
            <person name="Ma L."/>
            <person name="Muller H."/>
            <person name="Nicaud J.-M."/>
            <person name="Nikolski M."/>
            <person name="Oztas S."/>
            <person name="Ozier-Kalogeropoulos O."/>
            <person name="Pellenz S."/>
            <person name="Potier S."/>
            <person name="Richard G.-F."/>
            <person name="Straub M.-L."/>
            <person name="Suleau A."/>
            <person name="Swennen D."/>
            <person name="Tekaia F."/>
            <person name="Wesolowski-Louvel M."/>
            <person name="Westhof E."/>
            <person name="Wirth B."/>
            <person name="Zeniou-Meyer M."/>
            <person name="Zivanovic Y."/>
            <person name="Bolotin-Fukuhara M."/>
            <person name="Thierry A."/>
            <person name="Bouchier C."/>
            <person name="Caudron B."/>
            <person name="Scarpelli C."/>
            <person name="Gaillardin C."/>
            <person name="Weissenbach J."/>
            <person name="Wincker P."/>
            <person name="Souciet J.-L."/>
        </authorList>
    </citation>
    <scope>NUCLEOTIDE SEQUENCE [LARGE SCALE GENOMIC DNA]</scope>
    <source>
        <strain>ATCC 8585 / CBS 2359 / DSM 70799 / NBRC 1267 / NRRL Y-1140 / WM37</strain>
    </source>
</reference>
<comment type="function">
    <text evidence="1">Component of the FACT complex, a general chromatin factor that acts to reorganize nucleosomes. The FACT complex is involved in multiple processes that require DNA as a template such as mRNA elongation, DNA replication and DNA repair. During transcription elongation the FACT complex acts as a histone chaperone that both destabilizes and restores nucleosomal structure. It facilitates the passage of RNA polymerase II and transcription by promoting the dissociation of one histone H2A-H2B dimer from the nucleosome, then subsequently promotes the reestablishment of the nucleosome following the passage of RNA polymerase II (By similarity).</text>
</comment>
<comment type="subunit">
    <text evidence="1">Forms a stable heterodimer with SPT16. The SPT16-POB3 dimer weakly associates with multiple molecules of NHP6 to form the FACT complex (By similarity).</text>
</comment>
<comment type="subcellular location">
    <subcellularLocation>
        <location evidence="2">Nucleus</location>
    </subcellularLocation>
    <subcellularLocation>
        <location evidence="2">Chromosome</location>
    </subcellularLocation>
    <text evidence="2">Colocalizes with RNA polymerase II on chromatin. Recruited to actively transcribed loci.</text>
</comment>
<comment type="miscellaneous">
    <text>In contrast to the orthologous protein in animals and plants, this protein does not contain a HMG box DNA-binding domain. This function may instead be provided by the HMG box of the associated NHP6 protein in the FACT complex of fungi.</text>
</comment>
<comment type="similarity">
    <text evidence="4">Belongs to the SSRP1 family.</text>
</comment>
<gene>
    <name type="primary">POB3</name>
    <name type="ordered locus">KLLA0B04906g</name>
</gene>
<protein>
    <recommendedName>
        <fullName>FACT complex subunit POB3</fullName>
    </recommendedName>
    <alternativeName>
        <fullName>Facilitates chromatin transcription complex subunit POB3</fullName>
    </alternativeName>
</protein>
<dbReference type="EMBL" id="CR382122">
    <property type="protein sequence ID" value="CAH02145.1"/>
    <property type="molecule type" value="Genomic_DNA"/>
</dbReference>
<dbReference type="RefSeq" id="XP_451752.1">
    <property type="nucleotide sequence ID" value="XM_451752.1"/>
</dbReference>
<dbReference type="SMR" id="Q6CWD7"/>
<dbReference type="FunCoup" id="Q6CWD7">
    <property type="interactions" value="1121"/>
</dbReference>
<dbReference type="STRING" id="284590.Q6CWD7"/>
<dbReference type="PaxDb" id="284590-Q6CWD7"/>
<dbReference type="KEGG" id="kla:KLLA0_B04906g"/>
<dbReference type="eggNOG" id="KOG0526">
    <property type="taxonomic scope" value="Eukaryota"/>
</dbReference>
<dbReference type="HOGENOM" id="CLU_017374_3_0_1"/>
<dbReference type="InParanoid" id="Q6CWD7"/>
<dbReference type="OMA" id="QVVTKIF"/>
<dbReference type="Proteomes" id="UP000000598">
    <property type="component" value="Chromosome B"/>
</dbReference>
<dbReference type="GO" id="GO:0035101">
    <property type="term" value="C:FACT complex"/>
    <property type="evidence" value="ECO:0007669"/>
    <property type="project" value="TreeGrafter"/>
</dbReference>
<dbReference type="GO" id="GO:0003677">
    <property type="term" value="F:DNA binding"/>
    <property type="evidence" value="ECO:0007669"/>
    <property type="project" value="InterPro"/>
</dbReference>
<dbReference type="GO" id="GO:0042393">
    <property type="term" value="F:histone binding"/>
    <property type="evidence" value="ECO:0007669"/>
    <property type="project" value="TreeGrafter"/>
</dbReference>
<dbReference type="GO" id="GO:0031491">
    <property type="term" value="F:nucleosome binding"/>
    <property type="evidence" value="ECO:0007669"/>
    <property type="project" value="TreeGrafter"/>
</dbReference>
<dbReference type="GO" id="GO:0006281">
    <property type="term" value="P:DNA repair"/>
    <property type="evidence" value="ECO:0007669"/>
    <property type="project" value="UniProtKB-KW"/>
</dbReference>
<dbReference type="GO" id="GO:0006260">
    <property type="term" value="P:DNA replication"/>
    <property type="evidence" value="ECO:0007669"/>
    <property type="project" value="UniProtKB-KW"/>
</dbReference>
<dbReference type="CDD" id="cd13230">
    <property type="entry name" value="PH1_SSRP1-like"/>
    <property type="match status" value="1"/>
</dbReference>
<dbReference type="CDD" id="cd13231">
    <property type="entry name" value="PH2_SSRP1-like"/>
    <property type="match status" value="1"/>
</dbReference>
<dbReference type="CDD" id="cd13229">
    <property type="entry name" value="PH_TFIIH"/>
    <property type="match status" value="1"/>
</dbReference>
<dbReference type="FunFam" id="2.30.29.30:FF:000398">
    <property type="entry name" value="FACT complex subunit POB3"/>
    <property type="match status" value="1"/>
</dbReference>
<dbReference type="FunFam" id="2.30.29.150:FF:000001">
    <property type="entry name" value="Fact complex subunit ssrp1"/>
    <property type="match status" value="1"/>
</dbReference>
<dbReference type="FunFam" id="2.30.29.30:FF:000098">
    <property type="entry name" value="Fact complex subunit ssrp1"/>
    <property type="match status" value="1"/>
</dbReference>
<dbReference type="Gene3D" id="2.30.29.150">
    <property type="match status" value="1"/>
</dbReference>
<dbReference type="Gene3D" id="2.30.29.30">
    <property type="entry name" value="Pleckstrin-homology domain (PH domain)/Phosphotyrosine-binding domain (PTB)"/>
    <property type="match status" value="2"/>
</dbReference>
<dbReference type="Gene3D" id="2.30.29.220">
    <property type="entry name" value="Structure-specific recognition protein (SSRP1)"/>
    <property type="match status" value="1"/>
</dbReference>
<dbReference type="InterPro" id="IPR011993">
    <property type="entry name" value="PH-like_dom_sf"/>
</dbReference>
<dbReference type="InterPro" id="IPR013719">
    <property type="entry name" value="RTT106/SPT16-like_middle_dom"/>
</dbReference>
<dbReference type="InterPro" id="IPR050454">
    <property type="entry name" value="RTT106/SSRP1_HistChap/FACT"/>
</dbReference>
<dbReference type="InterPro" id="IPR048993">
    <property type="entry name" value="SSRP1-like_PH1"/>
</dbReference>
<dbReference type="InterPro" id="IPR000969">
    <property type="entry name" value="SSRP1/POB3"/>
</dbReference>
<dbReference type="InterPro" id="IPR035417">
    <property type="entry name" value="SSRP1/POB3_N"/>
</dbReference>
<dbReference type="InterPro" id="IPR024954">
    <property type="entry name" value="SSRP1_DD"/>
</dbReference>
<dbReference type="InterPro" id="IPR038167">
    <property type="entry name" value="SSRP1_sf"/>
</dbReference>
<dbReference type="PANTHER" id="PTHR45849">
    <property type="entry name" value="FACT COMPLEX SUBUNIT SSRP1"/>
    <property type="match status" value="1"/>
</dbReference>
<dbReference type="PANTHER" id="PTHR45849:SF1">
    <property type="entry name" value="FACT COMPLEX SUBUNIT SSRP1"/>
    <property type="match status" value="1"/>
</dbReference>
<dbReference type="Pfam" id="PF21103">
    <property type="entry name" value="PH1_SSRP1-like"/>
    <property type="match status" value="1"/>
</dbReference>
<dbReference type="Pfam" id="PF17292">
    <property type="entry name" value="POB3_N"/>
    <property type="match status" value="1"/>
</dbReference>
<dbReference type="Pfam" id="PF08512">
    <property type="entry name" value="Rttp106-like_middle"/>
    <property type="match status" value="1"/>
</dbReference>
<dbReference type="Pfam" id="PF03531">
    <property type="entry name" value="SSrecog"/>
    <property type="match status" value="1"/>
</dbReference>
<dbReference type="PRINTS" id="PR00887">
    <property type="entry name" value="SSRCOGNITION"/>
</dbReference>
<dbReference type="SMART" id="SM01287">
    <property type="entry name" value="Rtt106"/>
    <property type="match status" value="1"/>
</dbReference>
<dbReference type="SUPFAM" id="SSF50729">
    <property type="entry name" value="PH domain-like"/>
    <property type="match status" value="1"/>
</dbReference>
<organism>
    <name type="scientific">Kluyveromyces lactis (strain ATCC 8585 / CBS 2359 / DSM 70799 / NBRC 1267 / NRRL Y-1140 / WM37)</name>
    <name type="common">Yeast</name>
    <name type="synonym">Candida sphaerica</name>
    <dbReference type="NCBI Taxonomy" id="284590"/>
    <lineage>
        <taxon>Eukaryota</taxon>
        <taxon>Fungi</taxon>
        <taxon>Dikarya</taxon>
        <taxon>Ascomycota</taxon>
        <taxon>Saccharomycotina</taxon>
        <taxon>Saccharomycetes</taxon>
        <taxon>Saccharomycetales</taxon>
        <taxon>Saccharomycetaceae</taxon>
        <taxon>Kluyveromyces</taxon>
    </lineage>
</organism>
<accession>Q6CWD7</accession>
<keyword id="KW-0158">Chromosome</keyword>
<keyword id="KW-0227">DNA damage</keyword>
<keyword id="KW-0234">DNA repair</keyword>
<keyword id="KW-0235">DNA replication</keyword>
<keyword id="KW-0539">Nucleus</keyword>
<keyword id="KW-1185">Reference proteome</keyword>
<keyword id="KW-0804">Transcription</keyword>
<keyword id="KW-0805">Transcription regulation</keyword>
<proteinExistence type="inferred from homology"/>
<evidence type="ECO:0000250" key="1"/>
<evidence type="ECO:0000250" key="2">
    <source>
        <dbReference type="UniProtKB" id="Q04636"/>
    </source>
</evidence>
<evidence type="ECO:0000256" key="3">
    <source>
        <dbReference type="SAM" id="MobiDB-lite"/>
    </source>
</evidence>
<evidence type="ECO:0000305" key="4"/>
<feature type="chain" id="PRO_0000245208" description="FACT complex subunit POB3">
    <location>
        <begin position="1"/>
        <end position="555"/>
    </location>
</feature>
<feature type="region of interest" description="Disordered" evidence="3">
    <location>
        <begin position="194"/>
        <end position="217"/>
    </location>
</feature>
<feature type="region of interest" description="Disordered" evidence="3">
    <location>
        <begin position="476"/>
        <end position="555"/>
    </location>
</feature>
<feature type="compositionally biased region" description="Basic and acidic residues" evidence="3">
    <location>
        <begin position="194"/>
        <end position="209"/>
    </location>
</feature>
<feature type="compositionally biased region" description="Acidic residues" evidence="3">
    <location>
        <begin position="520"/>
        <end position="531"/>
    </location>
</feature>
<feature type="compositionally biased region" description="Basic and acidic residues" evidence="3">
    <location>
        <begin position="541"/>
        <end position="555"/>
    </location>
</feature>